<evidence type="ECO:0000250" key="1">
    <source>
        <dbReference type="UniProtKB" id="Q99JG2"/>
    </source>
</evidence>
<evidence type="ECO:0000255" key="2"/>
<evidence type="ECO:0000255" key="3">
    <source>
        <dbReference type="PROSITE-ProRule" id="PRU00521"/>
    </source>
</evidence>
<evidence type="ECO:0000256" key="4">
    <source>
        <dbReference type="SAM" id="MobiDB-lite"/>
    </source>
</evidence>
<evidence type="ECO:0000269" key="5">
    <source>
    </source>
</evidence>
<evidence type="ECO:0000269" key="6">
    <source>
    </source>
</evidence>
<evidence type="ECO:0000269" key="7">
    <source>
    </source>
</evidence>
<evidence type="ECO:0000269" key="8">
    <source>
    </source>
</evidence>
<evidence type="ECO:0000269" key="9">
    <source>
    </source>
</evidence>
<evidence type="ECO:0000269" key="10">
    <source>
    </source>
</evidence>
<evidence type="ECO:0000269" key="11">
    <source>
    </source>
</evidence>
<evidence type="ECO:0000305" key="12"/>
<proteinExistence type="evidence at protein level"/>
<sequence length="481" mass="52771">MRWLWPLAVSLAVILAVGLSRVSGGAPLHLGRHRAETQEQQSRSKRGTEDEEAKGVQQYVPEEWAEYPRPIHPAGLQPTKPLVATSPNPGKDGGTPDSGQELRGNLTGAPGQRLQIQNPLYPVTESSYSAYAIMLLALVVFAVGIVGNLSVMCIVWHSYYLKSAWNSILASLALWDFLVLFFCLPIVIFNEITKQRLLGDVSCRAVPFMEVSSLGVTTFSLCALGIDRFHVATSTLPKVRPIERCQSILAKLAVIWVGSMTLAVPELLLWQLAQEPAPTMGTLDSCIMKPSASLPESLYSLVMTYQNARMWWYFGCYFCLPILFTVTCQLVTWRVRGPPGRKSECRASKHEQCESQLNSTVVGLTVVYAFCTLPENVCNIVVAYLSTELTRQTLDLLGLINQFSTFFKGAITPVLLLCICRPLGQAFLDCCCCCCCEECGGASEASAANGSDNKLKTEVSSSIYFHKPRESPPLLPLGTPC</sequence>
<gene>
    <name type="primary">GPR37L1</name>
    <name type="synonym">ETBRLP2</name>
</gene>
<protein>
    <recommendedName>
        <fullName>G-protein coupled receptor 37-like 1</fullName>
    </recommendedName>
    <alternativeName>
        <fullName>Endothelin B receptor-like protein 2</fullName>
        <shortName>ETBR-LP-2</shortName>
    </alternativeName>
</protein>
<keyword id="KW-1003">Cell membrane</keyword>
<keyword id="KW-0966">Cell projection</keyword>
<keyword id="KW-1015">Disulfide bond</keyword>
<keyword id="KW-0297">G-protein coupled receptor</keyword>
<keyword id="KW-0325">Glycoprotein</keyword>
<keyword id="KW-0472">Membrane</keyword>
<keyword id="KW-0597">Phosphoprotein</keyword>
<keyword id="KW-1267">Proteomics identification</keyword>
<keyword id="KW-0675">Receptor</keyword>
<keyword id="KW-1185">Reference proteome</keyword>
<keyword id="KW-0732">Signal</keyword>
<keyword id="KW-0807">Transducer</keyword>
<keyword id="KW-0812">Transmembrane</keyword>
<keyword id="KW-1133">Transmembrane helix</keyword>
<keyword id="KW-0832">Ubl conjugation</keyword>
<dbReference type="EMBL" id="Y16280">
    <property type="protein sequence ID" value="CAA76153.1"/>
    <property type="molecule type" value="mRNA"/>
</dbReference>
<dbReference type="EMBL" id="AK313044">
    <property type="protein sequence ID" value="BAG35876.1"/>
    <property type="molecule type" value="mRNA"/>
</dbReference>
<dbReference type="EMBL" id="AK222639">
    <property type="protein sequence ID" value="BAD96359.1"/>
    <property type="molecule type" value="mRNA"/>
</dbReference>
<dbReference type="EMBL" id="AL592300">
    <property type="status" value="NOT_ANNOTATED_CDS"/>
    <property type="molecule type" value="Genomic_DNA"/>
</dbReference>
<dbReference type="EMBL" id="BC050334">
    <property type="protein sequence ID" value="AAH50334.1"/>
    <property type="molecule type" value="mRNA"/>
</dbReference>
<dbReference type="CCDS" id="CCDS1420.1"/>
<dbReference type="RefSeq" id="NP_004758.3">
    <property type="nucleotide sequence ID" value="NM_004767.3"/>
</dbReference>
<dbReference type="SMR" id="O60883"/>
<dbReference type="BioGRID" id="114700">
    <property type="interactions" value="56"/>
</dbReference>
<dbReference type="FunCoup" id="O60883">
    <property type="interactions" value="392"/>
</dbReference>
<dbReference type="IntAct" id="O60883">
    <property type="interactions" value="55"/>
</dbReference>
<dbReference type="MINT" id="O60883"/>
<dbReference type="STRING" id="9606.ENSP00000356251"/>
<dbReference type="BindingDB" id="O60883"/>
<dbReference type="ChEMBL" id="CHEMBL5892"/>
<dbReference type="GuidetoPHARMACOLOGY" id="104"/>
<dbReference type="GlyConnect" id="661">
    <property type="glycosylation" value="1 O-Linked glycan (6 sites)"/>
</dbReference>
<dbReference type="GlyCosmos" id="O60883">
    <property type="glycosylation" value="7 sites, 2 glycans"/>
</dbReference>
<dbReference type="GlyGen" id="O60883">
    <property type="glycosylation" value="8 sites, 2 O-linked glycans (6 sites)"/>
</dbReference>
<dbReference type="iPTMnet" id="O60883"/>
<dbReference type="PhosphoSitePlus" id="O60883"/>
<dbReference type="BioMuta" id="GPR37L1"/>
<dbReference type="MassIVE" id="O60883"/>
<dbReference type="PaxDb" id="9606-ENSP00000356251"/>
<dbReference type="PeptideAtlas" id="O60883"/>
<dbReference type="ProteomicsDB" id="49649"/>
<dbReference type="Antibodypedia" id="20649">
    <property type="antibodies" value="292 antibodies from 32 providers"/>
</dbReference>
<dbReference type="DNASU" id="9283"/>
<dbReference type="Ensembl" id="ENST00000367282.6">
    <property type="protein sequence ID" value="ENSP00000356251.4"/>
    <property type="gene ID" value="ENSG00000170075.10"/>
</dbReference>
<dbReference type="GeneID" id="9283"/>
<dbReference type="KEGG" id="hsa:9283"/>
<dbReference type="MANE-Select" id="ENST00000367282.6">
    <property type="protein sequence ID" value="ENSP00000356251.4"/>
    <property type="RefSeq nucleotide sequence ID" value="NM_004767.5"/>
    <property type="RefSeq protein sequence ID" value="NP_004758.3"/>
</dbReference>
<dbReference type="UCSC" id="uc001gxj.4">
    <property type="organism name" value="human"/>
</dbReference>
<dbReference type="AGR" id="HGNC:14923"/>
<dbReference type="CTD" id="9283"/>
<dbReference type="DisGeNET" id="9283"/>
<dbReference type="GeneCards" id="GPR37L1"/>
<dbReference type="HGNC" id="HGNC:14923">
    <property type="gene designation" value="GPR37L1"/>
</dbReference>
<dbReference type="HPA" id="ENSG00000170075">
    <property type="expression patterns" value="Tissue enriched (brain)"/>
</dbReference>
<dbReference type="MIM" id="617630">
    <property type="type" value="gene"/>
</dbReference>
<dbReference type="neXtProt" id="NX_O60883"/>
<dbReference type="OpenTargets" id="ENSG00000170075"/>
<dbReference type="PharmGKB" id="PA28883"/>
<dbReference type="VEuPathDB" id="HostDB:ENSG00000170075"/>
<dbReference type="eggNOG" id="KOG3656">
    <property type="taxonomic scope" value="Eukaryota"/>
</dbReference>
<dbReference type="GeneTree" id="ENSGT01120000271846"/>
<dbReference type="HOGENOM" id="CLU_029119_0_0_1"/>
<dbReference type="InParanoid" id="O60883"/>
<dbReference type="OMA" id="DSCVMKP"/>
<dbReference type="OrthoDB" id="8960080at2759"/>
<dbReference type="PAN-GO" id="O60883">
    <property type="GO annotations" value="5 GO annotations based on evolutionary models"/>
</dbReference>
<dbReference type="PhylomeDB" id="O60883"/>
<dbReference type="TreeFam" id="TF331292"/>
<dbReference type="PathwayCommons" id="O60883"/>
<dbReference type="Reactome" id="R-HSA-375276">
    <property type="pathway name" value="Peptide ligand-binding receptors"/>
</dbReference>
<dbReference type="Reactome" id="R-HSA-418594">
    <property type="pathway name" value="G alpha (i) signalling events"/>
</dbReference>
<dbReference type="SignaLink" id="O60883"/>
<dbReference type="BioGRID-ORCS" id="9283">
    <property type="hits" value="14 hits in 1137 CRISPR screens"/>
</dbReference>
<dbReference type="ChiTaRS" id="GPR37L1">
    <property type="organism name" value="human"/>
</dbReference>
<dbReference type="GeneWiki" id="GPR37L1"/>
<dbReference type="GenomeRNAi" id="9283"/>
<dbReference type="Pharos" id="O60883">
    <property type="development level" value="Tbio"/>
</dbReference>
<dbReference type="PRO" id="PR:O60883"/>
<dbReference type="Proteomes" id="UP000005640">
    <property type="component" value="Chromosome 1"/>
</dbReference>
<dbReference type="RNAct" id="O60883">
    <property type="molecule type" value="protein"/>
</dbReference>
<dbReference type="Bgee" id="ENSG00000170075">
    <property type="expression patterns" value="Expressed in buccal mucosa cell and 115 other cell types or tissues"/>
</dbReference>
<dbReference type="GO" id="GO:0060170">
    <property type="term" value="C:ciliary membrane"/>
    <property type="evidence" value="ECO:0007669"/>
    <property type="project" value="UniProtKB-SubCell"/>
</dbReference>
<dbReference type="GO" id="GO:0016020">
    <property type="term" value="C:membrane"/>
    <property type="evidence" value="ECO:0000303"/>
    <property type="project" value="UniProtKB"/>
</dbReference>
<dbReference type="GO" id="GO:0005886">
    <property type="term" value="C:plasma membrane"/>
    <property type="evidence" value="ECO:0000314"/>
    <property type="project" value="UniProtKB"/>
</dbReference>
<dbReference type="GO" id="GO:0043235">
    <property type="term" value="C:receptor complex"/>
    <property type="evidence" value="ECO:0000314"/>
    <property type="project" value="MGI"/>
</dbReference>
<dbReference type="GO" id="GO:0008528">
    <property type="term" value="F:G protein-coupled peptide receptor activity"/>
    <property type="evidence" value="ECO:0000314"/>
    <property type="project" value="ParkinsonsUK-UCL"/>
</dbReference>
<dbReference type="GO" id="GO:0004930">
    <property type="term" value="F:G protein-coupled receptor activity"/>
    <property type="evidence" value="ECO:0000314"/>
    <property type="project" value="UniProtKB"/>
</dbReference>
<dbReference type="GO" id="GO:0042277">
    <property type="term" value="F:peptide binding"/>
    <property type="evidence" value="ECO:0000353"/>
    <property type="project" value="ParkinsonsUK-UCL"/>
</dbReference>
<dbReference type="GO" id="GO:0036505">
    <property type="term" value="F:prosaposin receptor activity"/>
    <property type="evidence" value="ECO:0000314"/>
    <property type="project" value="ParkinsonsUK-UCL"/>
</dbReference>
<dbReference type="GO" id="GO:0007193">
    <property type="term" value="P:adenylate cyclase-inhibiting G protein-coupled receptor signaling pathway"/>
    <property type="evidence" value="ECO:0000314"/>
    <property type="project" value="ParkinsonsUK-UCL"/>
</dbReference>
<dbReference type="GO" id="GO:0060020">
    <property type="term" value="P:Bergmann glial cell differentiation"/>
    <property type="evidence" value="ECO:0007669"/>
    <property type="project" value="Ensembl"/>
</dbReference>
<dbReference type="GO" id="GO:0034614">
    <property type="term" value="P:cellular response to reactive oxygen species"/>
    <property type="evidence" value="ECO:0000250"/>
    <property type="project" value="ParkinsonsUK-UCL"/>
</dbReference>
<dbReference type="GO" id="GO:0048712">
    <property type="term" value="P:negative regulation of astrocyte differentiation"/>
    <property type="evidence" value="ECO:0007669"/>
    <property type="project" value="Ensembl"/>
</dbReference>
<dbReference type="GO" id="GO:0045665">
    <property type="term" value="P:negative regulation of neuron differentiation"/>
    <property type="evidence" value="ECO:0007669"/>
    <property type="project" value="Ensembl"/>
</dbReference>
<dbReference type="GO" id="GO:0045879">
    <property type="term" value="P:negative regulation of smoothened signaling pathway"/>
    <property type="evidence" value="ECO:0007669"/>
    <property type="project" value="Ensembl"/>
</dbReference>
<dbReference type="GO" id="GO:0003085">
    <property type="term" value="P:negative regulation of systemic arterial blood pressure"/>
    <property type="evidence" value="ECO:0000250"/>
    <property type="project" value="UniProtKB"/>
</dbReference>
<dbReference type="GO" id="GO:0021940">
    <property type="term" value="P:positive regulation of cerebellar granule cell precursor proliferation"/>
    <property type="evidence" value="ECO:0007669"/>
    <property type="project" value="Ensembl"/>
</dbReference>
<dbReference type="GO" id="GO:0043410">
    <property type="term" value="P:positive regulation of MAPK cascade"/>
    <property type="evidence" value="ECO:0000314"/>
    <property type="project" value="ParkinsonsUK-UCL"/>
</dbReference>
<dbReference type="GO" id="GO:0007224">
    <property type="term" value="P:smoothened signaling pathway"/>
    <property type="evidence" value="ECO:0007669"/>
    <property type="project" value="Ensembl"/>
</dbReference>
<dbReference type="CDD" id="cd15126">
    <property type="entry name" value="7tmA_ETBR-LP2"/>
    <property type="match status" value="1"/>
</dbReference>
<dbReference type="FunFam" id="1.20.1070.10:FF:000059">
    <property type="entry name" value="G protein-coupled receptor 37"/>
    <property type="match status" value="1"/>
</dbReference>
<dbReference type="Gene3D" id="1.20.1070.10">
    <property type="entry name" value="Rhodopsin 7-helix transmembrane proteins"/>
    <property type="match status" value="1"/>
</dbReference>
<dbReference type="InterPro" id="IPR000276">
    <property type="entry name" value="GPCR_Rhodpsn"/>
</dbReference>
<dbReference type="InterPro" id="IPR017452">
    <property type="entry name" value="GPCR_Rhodpsn_7TM"/>
</dbReference>
<dbReference type="InterPro" id="IPR003909">
    <property type="entry name" value="GPR37_orph"/>
</dbReference>
<dbReference type="PANTHER" id="PTHR46216:SF4">
    <property type="entry name" value="G-PROTEIN COUPLED RECEPTOR 37-LIKE 1"/>
    <property type="match status" value="1"/>
</dbReference>
<dbReference type="PANTHER" id="PTHR46216">
    <property type="entry name" value="PROSAPOSIN RECEPTOR GPR37 FAMILY MEMBER"/>
    <property type="match status" value="1"/>
</dbReference>
<dbReference type="Pfam" id="PF00001">
    <property type="entry name" value="7tm_1"/>
    <property type="match status" value="1"/>
</dbReference>
<dbReference type="PRINTS" id="PR00237">
    <property type="entry name" value="GPCRRHODOPSN"/>
</dbReference>
<dbReference type="PRINTS" id="PR01421">
    <property type="entry name" value="GPR37ORPHANR"/>
</dbReference>
<dbReference type="SUPFAM" id="SSF81321">
    <property type="entry name" value="Family A G protein-coupled receptor-like"/>
    <property type="match status" value="1"/>
</dbReference>
<dbReference type="PROSITE" id="PS50262">
    <property type="entry name" value="G_PROTEIN_RECEP_F1_2"/>
    <property type="match status" value="1"/>
</dbReference>
<feature type="signal peptide" evidence="2">
    <location>
        <begin position="1"/>
        <end position="25"/>
    </location>
</feature>
<feature type="chain" id="PRO_0000012796" description="G-protein coupled receptor 37-like 1">
    <location>
        <begin position="26"/>
        <end position="481"/>
    </location>
</feature>
<feature type="topological domain" description="Extracellular" evidence="2">
    <location>
        <begin position="26"/>
        <end position="134"/>
    </location>
</feature>
<feature type="transmembrane region" description="Helical; Name=1" evidence="2">
    <location>
        <begin position="135"/>
        <end position="155"/>
    </location>
</feature>
<feature type="topological domain" description="Cytoplasmic" evidence="2">
    <location>
        <begin position="156"/>
        <end position="167"/>
    </location>
</feature>
<feature type="transmembrane region" description="Helical; Name=2" evidence="2">
    <location>
        <begin position="168"/>
        <end position="188"/>
    </location>
</feature>
<feature type="topological domain" description="Extracellular" evidence="2">
    <location>
        <begin position="189"/>
        <end position="205"/>
    </location>
</feature>
<feature type="transmembrane region" description="Helical; Name=3" evidence="2">
    <location>
        <begin position="206"/>
        <end position="226"/>
    </location>
</feature>
<feature type="topological domain" description="Cytoplasmic" evidence="2">
    <location>
        <begin position="227"/>
        <end position="251"/>
    </location>
</feature>
<feature type="transmembrane region" description="Helical; Name=4" evidence="2">
    <location>
        <begin position="252"/>
        <end position="272"/>
    </location>
</feature>
<feature type="topological domain" description="Extracellular" evidence="2">
    <location>
        <begin position="273"/>
        <end position="310"/>
    </location>
</feature>
<feature type="transmembrane region" description="Helical; Name=5" evidence="2">
    <location>
        <begin position="311"/>
        <end position="331"/>
    </location>
</feature>
<feature type="topological domain" description="Cytoplasmic" evidence="2">
    <location>
        <begin position="332"/>
        <end position="361"/>
    </location>
</feature>
<feature type="transmembrane region" description="Helical; Name=6" evidence="2">
    <location>
        <begin position="362"/>
        <end position="382"/>
    </location>
</feature>
<feature type="topological domain" description="Extracellular" evidence="2">
    <location>
        <begin position="383"/>
        <end position="398"/>
    </location>
</feature>
<feature type="transmembrane region" description="Helical; Name=7" evidence="2">
    <location>
        <begin position="399"/>
        <end position="419"/>
    </location>
</feature>
<feature type="topological domain" description="Cytoplasmic" evidence="2">
    <location>
        <begin position="420"/>
        <end position="481"/>
    </location>
</feature>
<feature type="region of interest" description="Disordered" evidence="4">
    <location>
        <begin position="26"/>
        <end position="58"/>
    </location>
</feature>
<feature type="region of interest" description="Disordered" evidence="4">
    <location>
        <begin position="70"/>
        <end position="108"/>
    </location>
</feature>
<feature type="modified residue" description="Phosphoserine" evidence="1">
    <location>
        <position position="471"/>
    </location>
</feature>
<feature type="modified residue" description="Phosphothreonine" evidence="1">
    <location>
        <position position="479"/>
    </location>
</feature>
<feature type="glycosylation site" description="O-linked (GalNAc...) threonine" evidence="7">
    <location>
        <position position="79"/>
    </location>
</feature>
<feature type="glycosylation site" description="O-linked (GalNAc...) threonine" evidence="7">
    <location>
        <position position="85"/>
    </location>
</feature>
<feature type="glycosylation site" description="O-linked (GalNAc...) serine" evidence="7">
    <location>
        <position position="86"/>
    </location>
</feature>
<feature type="glycosylation site" description="O-linked (GalNAc...) threonine" evidence="7">
    <location>
        <position position="95"/>
    </location>
</feature>
<feature type="glycosylation site" description="N-linked (GlcNAc...) asparagine" evidence="2">
    <location>
        <position position="105"/>
    </location>
</feature>
<feature type="glycosylation site" description="O-linked (GalNAc...) threonine" evidence="7">
    <location>
        <position position="107"/>
    </location>
</feature>
<feature type="disulfide bond" evidence="3">
    <location>
        <begin position="203"/>
        <end position="286"/>
    </location>
</feature>
<feature type="sequence variant" id="VAR_047455" description="In dbSNP:rs3795594.">
    <original>P</original>
    <variation>A</variation>
    <location>
        <position position="81"/>
    </location>
</feature>
<feature type="sequence variant" id="VAR_047456" description="In dbSNP:rs3795595." evidence="5 11">
    <original>G</original>
    <variation>D</variation>
    <location>
        <position position="90"/>
    </location>
</feature>
<feature type="sequence variant" id="VAR_047457" description="In dbSNP:rs17854616." evidence="6">
    <original>K</original>
    <variation>R</variation>
    <location>
        <position position="91"/>
    </location>
</feature>
<feature type="sequence variant" id="VAR_080868" description="Found in siblings with a form of progressive myoclonus epilepsy; uncertain significance; no effect on expression levels, cell surface location, signaling activity or ubiquitination; dbSNP:rs372386575." evidence="10">
    <original>K</original>
    <variation>N</variation>
    <location>
        <position position="349"/>
    </location>
</feature>
<feature type="sequence conflict" description="In Ref. 2; BAG35876." evidence="12" ref="2">
    <original>R</original>
    <variation>S</variation>
    <location>
        <position position="204"/>
    </location>
</feature>
<feature type="sequence conflict" description="In Ref. 2; BAG35876." evidence="12" ref="2">
    <original>C</original>
    <variation>F</variation>
    <location>
        <position position="433"/>
    </location>
</feature>
<name>G37L1_HUMAN</name>
<organism>
    <name type="scientific">Homo sapiens</name>
    <name type="common">Human</name>
    <dbReference type="NCBI Taxonomy" id="9606"/>
    <lineage>
        <taxon>Eukaryota</taxon>
        <taxon>Metazoa</taxon>
        <taxon>Chordata</taxon>
        <taxon>Craniata</taxon>
        <taxon>Vertebrata</taxon>
        <taxon>Euteleostomi</taxon>
        <taxon>Mammalia</taxon>
        <taxon>Eutheria</taxon>
        <taxon>Euarchontoglires</taxon>
        <taxon>Primates</taxon>
        <taxon>Haplorrhini</taxon>
        <taxon>Catarrhini</taxon>
        <taxon>Hominidae</taxon>
        <taxon>Homo</taxon>
    </lineage>
</organism>
<comment type="function">
    <text evidence="1 8 9 10">G-protein coupled receptor (PubMed:27072655). Has been shown to bind the neuroprotective and glioprotective factor prosaposin (PSAP), leading to endocytosis followed by an ERK phosphorylation cascade (PubMed:23690594). However, other studies have shown that prosaposin does not increase activity (PubMed:27072655, PubMed:28688853). It has been suggested that GPR37L1 is a constitutively active receptor which signals through the guanine nucleotide-binding protein G(s) subunit alpha (PubMed:27072655). Participates in the regulation of postnatal cerebellar development by modulating the Shh pathway (By similarity). Regulates baseline blood pressure in females and protects against cardiovascular stress in males (By similarity). Mediates inhibition of astrocyte glutamate transporters and reduction in neuronal N-methyl-D-aspartate receptor activity (By similarity).</text>
</comment>
<comment type="subunit">
    <text evidence="1">Interacts with the PTCH1 receptor.</text>
</comment>
<comment type="interaction">
    <interactant intactId="EBI-2927498">
        <id>O60883</id>
    </interactant>
    <interactant intactId="EBI-2682765">
        <id>O60242</id>
        <label>ADGRB3</label>
    </interactant>
    <organismsDiffer>false</organismsDiffer>
    <experiments>3</experiments>
</comment>
<comment type="interaction">
    <interactant intactId="EBI-2927498">
        <id>O60883</id>
    </interactant>
    <interactant intactId="EBI-745213">
        <id>P29972</id>
        <label>AQP1</label>
    </interactant>
    <organismsDiffer>false</organismsDiffer>
    <experiments>3</experiments>
</comment>
<comment type="interaction">
    <interactant intactId="EBI-2927498">
        <id>O60883</id>
    </interactant>
    <interactant intactId="EBI-12820279">
        <id>Q96PS8</id>
        <label>AQP10</label>
    </interactant>
    <organismsDiffer>false</organismsDiffer>
    <experiments>3</experiments>
</comment>
<comment type="interaction">
    <interactant intactId="EBI-2927498">
        <id>O60883</id>
    </interactant>
    <interactant intactId="EBI-11343438">
        <id>Q3SXY8</id>
        <label>ARL13B</label>
    </interactant>
    <organismsDiffer>false</organismsDiffer>
    <experiments>3</experiments>
</comment>
<comment type="interaction">
    <interactant intactId="EBI-2927498">
        <id>O60883</id>
    </interactant>
    <interactant intactId="EBI-13046140">
        <id>P15529-3</id>
        <label>CD46</label>
    </interactant>
    <organismsDiffer>false</organismsDiffer>
    <experiments>3</experiments>
</comment>
<comment type="interaction">
    <interactant intactId="EBI-2927498">
        <id>O60883</id>
    </interactant>
    <interactant intactId="EBI-1045797">
        <id>Q8N5K1</id>
        <label>CISD2</label>
    </interactant>
    <organismsDiffer>false</organismsDiffer>
    <experiments>3</experiments>
</comment>
<comment type="interaction">
    <interactant intactId="EBI-2927498">
        <id>O60883</id>
    </interactant>
    <interactant intactId="EBI-740744">
        <id>O95471</id>
        <label>CLDN7</label>
    </interactant>
    <organismsDiffer>false</organismsDiffer>
    <experiments>3</experiments>
</comment>
<comment type="interaction">
    <interactant intactId="EBI-2927498">
        <id>O60883</id>
    </interactant>
    <interactant intactId="EBI-11959453">
        <id>Q8NHS1</id>
        <label>CLDND2</label>
    </interactant>
    <organismsDiffer>false</organismsDiffer>
    <experiments>3</experiments>
</comment>
<comment type="interaction">
    <interactant intactId="EBI-2927498">
        <id>O60883</id>
    </interactant>
    <interactant intactId="EBI-15839595">
        <id>Q6UVW9</id>
        <label>CLEC2A</label>
    </interactant>
    <organismsDiffer>false</organismsDiffer>
    <experiments>3</experiments>
</comment>
<comment type="interaction">
    <interactant intactId="EBI-2927498">
        <id>O60883</id>
    </interactant>
    <interactant intactId="EBI-6942903">
        <id>Q96BA8</id>
        <label>CREB3L1</label>
    </interactant>
    <organismsDiffer>false</organismsDiffer>
    <experiments>3</experiments>
</comment>
<comment type="interaction">
    <interactant intactId="EBI-2927498">
        <id>O60883</id>
    </interactant>
    <interactant intactId="EBI-10269179">
        <id>Q8NBI2</id>
        <label>CYB561A3</label>
    </interactant>
    <organismsDiffer>false</organismsDiffer>
    <experiments>3</experiments>
</comment>
<comment type="interaction">
    <interactant intactId="EBI-2927498">
        <id>O60883</id>
    </interactant>
    <interactant intactId="EBI-18535450">
        <id>Q9GZR5</id>
        <label>ELOVL4</label>
    </interactant>
    <organismsDiffer>false</organismsDiffer>
    <experiments>3</experiments>
</comment>
<comment type="interaction">
    <interactant intactId="EBI-2927498">
        <id>O60883</id>
    </interactant>
    <interactant intactId="EBI-711490">
        <id>Q9UKR5</id>
        <label>ERG28</label>
    </interactant>
    <organismsDiffer>false</organismsDiffer>
    <experiments>3</experiments>
</comment>
<comment type="interaction">
    <interactant intactId="EBI-2927498">
        <id>O60883</id>
    </interactant>
    <interactant intactId="EBI-18304435">
        <id>Q5JX71</id>
        <label>FAM209A</label>
    </interactant>
    <organismsDiffer>false</organismsDiffer>
    <experiments>3</experiments>
</comment>
<comment type="interaction">
    <interactant intactId="EBI-2927498">
        <id>O60883</id>
    </interactant>
    <interactant intactId="EBI-2833872">
        <id>O15552</id>
        <label>FFAR2</label>
    </interactant>
    <organismsDiffer>false</organismsDiffer>
    <experiments>3</experiments>
</comment>
<comment type="interaction">
    <interactant intactId="EBI-2927498">
        <id>O60883</id>
    </interactant>
    <interactant intactId="EBI-12175685">
        <id>Q14802-3</id>
        <label>FXYD3</label>
    </interactant>
    <organismsDiffer>false</organismsDiffer>
    <experiments>3</experiments>
</comment>
<comment type="interaction">
    <interactant intactId="EBI-2927498">
        <id>O60883</id>
    </interactant>
    <interactant intactId="EBI-13345167">
        <id>Q8TDT2</id>
        <label>GPR152</label>
    </interactant>
    <organismsDiffer>false</organismsDiffer>
    <experiments>3</experiments>
</comment>
<comment type="interaction">
    <interactant intactId="EBI-2927498">
        <id>O60883</id>
    </interactant>
    <interactant intactId="EBI-18076404">
        <id>O15529</id>
        <label>GPR42</label>
    </interactant>
    <organismsDiffer>false</organismsDiffer>
    <experiments>3</experiments>
</comment>
<comment type="interaction">
    <interactant intactId="EBI-2927498">
        <id>O60883</id>
    </interactant>
    <interactant intactId="EBI-11721746">
        <id>Q8TED1</id>
        <label>GPX8</label>
    </interactant>
    <organismsDiffer>false</organismsDiffer>
    <experiments>3</experiments>
</comment>
<comment type="interaction">
    <interactant intactId="EBI-2927498">
        <id>O60883</id>
    </interactant>
    <interactant intactId="EBI-720480">
        <id>P24593</id>
        <label>IGFBP5</label>
    </interactant>
    <organismsDiffer>false</organismsDiffer>
    <experiments>3</experiments>
</comment>
<comment type="interaction">
    <interactant intactId="EBI-2927498">
        <id>O60883</id>
    </interactant>
    <interactant intactId="EBI-8503746">
        <id>Q9Y5U4</id>
        <label>INSIG2</label>
    </interactant>
    <organismsDiffer>false</organismsDiffer>
    <experiments>3</experiments>
</comment>
<comment type="interaction">
    <interactant intactId="EBI-2927498">
        <id>O60883</id>
    </interactant>
    <interactant intactId="EBI-10266796">
        <id>Q8N5M9</id>
        <label>JAGN1</label>
    </interactant>
    <organismsDiffer>false</organismsDiffer>
    <experiments>3</experiments>
</comment>
<comment type="interaction">
    <interactant intactId="EBI-2927498">
        <id>O60883</id>
    </interactant>
    <interactant intactId="EBI-2820517">
        <id>Q8TAF8</id>
        <label>LHFPL5</label>
    </interactant>
    <organismsDiffer>false</organismsDiffer>
    <experiments>3</experiments>
</comment>
<comment type="interaction">
    <interactant intactId="EBI-2927498">
        <id>O60883</id>
    </interactant>
    <interactant intactId="EBI-16427978">
        <id>Q9BQ51</id>
        <label>PDCD1LG2</label>
    </interactant>
    <organismsDiffer>false</organismsDiffer>
    <experiments>3</experiments>
</comment>
<comment type="interaction">
    <interactant intactId="EBI-2927498">
        <id>O60883</id>
    </interactant>
    <interactant intactId="EBI-692836">
        <id>P26678</id>
        <label>PLN</label>
    </interactant>
    <organismsDiffer>false</organismsDiffer>
    <experiments>3</experiments>
</comment>
<comment type="interaction">
    <interactant intactId="EBI-2927498">
        <id>O60883</id>
    </interactant>
    <interactant intactId="EBI-2803892">
        <id>P42785</id>
        <label>PRCP</label>
    </interactant>
    <organismsDiffer>false</organismsDiffer>
    <experiments>2</experiments>
</comment>
<comment type="interaction">
    <interactant intactId="EBI-2927498">
        <id>O60883</id>
    </interactant>
    <interactant intactId="EBI-2129998">
        <id>Q9H9V4</id>
        <label>RNF122</label>
    </interactant>
    <organismsDiffer>false</organismsDiffer>
    <experiments>3</experiments>
</comment>
<comment type="interaction">
    <interactant intactId="EBI-2927498">
        <id>O60883</id>
    </interactant>
    <interactant intactId="EBI-1052363">
        <id>Q9NS64</id>
        <label>RPRM</label>
    </interactant>
    <organismsDiffer>false</organismsDiffer>
    <experiments>3</experiments>
</comment>
<comment type="interaction">
    <interactant intactId="EBI-2927498">
        <id>O60883</id>
    </interactant>
    <interactant intactId="EBI-1564650">
        <id>Q14108</id>
        <label>SCARB2</label>
    </interactant>
    <organismsDiffer>false</organismsDiffer>
    <experiments>3</experiments>
</comment>
<comment type="interaction">
    <interactant intactId="EBI-2927498">
        <id>O60883</id>
    </interactant>
    <interactant intactId="EBI-12056025">
        <id>Q14162</id>
        <label>SCARF1</label>
    </interactant>
    <organismsDiffer>false</organismsDiffer>
    <experiments>3</experiments>
</comment>
<comment type="interaction">
    <interactant intactId="EBI-2927498">
        <id>O60883</id>
    </interactant>
    <interactant intactId="EBI-8652744">
        <id>Q96IW7</id>
        <label>SEC22A</label>
    </interactant>
    <organismsDiffer>false</organismsDiffer>
    <experiments>3</experiments>
</comment>
<comment type="interaction">
    <interactant intactId="EBI-2927498">
        <id>O60883</id>
    </interactant>
    <interactant intactId="EBI-10329948">
        <id>Q9Y6X1</id>
        <label>SERP1</label>
    </interactant>
    <organismsDiffer>false</organismsDiffer>
    <experiments>3</experiments>
</comment>
<comment type="interaction">
    <interactant intactId="EBI-2927498">
        <id>O60883</id>
    </interactant>
    <interactant intactId="EBI-10262251">
        <id>Q8IWU4</id>
        <label>SLC30A8</label>
    </interactant>
    <organismsDiffer>false</organismsDiffer>
    <experiments>3</experiments>
</comment>
<comment type="interaction">
    <interactant intactId="EBI-2927498">
        <id>O60883</id>
    </interactant>
    <interactant intactId="EBI-1211440">
        <id>P27105</id>
        <label>STOM</label>
    </interactant>
    <organismsDiffer>false</organismsDiffer>
    <experiments>3</experiments>
</comment>
<comment type="interaction">
    <interactant intactId="EBI-2927498">
        <id>O60883</id>
    </interactant>
    <interactant intactId="EBI-10273251">
        <id>Q8TBG9</id>
        <label>SYNPR</label>
    </interactant>
    <organismsDiffer>false</organismsDiffer>
    <experiments>3</experiments>
</comment>
<comment type="interaction">
    <interactant intactId="EBI-2927498">
        <id>O60883</id>
    </interactant>
    <interactant intactId="EBI-726691">
        <id>Q8WY91</id>
        <label>THAP4</label>
    </interactant>
    <organismsDiffer>false</organismsDiffer>
    <experiments>3</experiments>
</comment>
<comment type="interaction">
    <interactant intactId="EBI-2927498">
        <id>O60883</id>
    </interactant>
    <interactant intactId="EBI-311394">
        <id>Q9C0I4</id>
        <label>THSD7B</label>
    </interactant>
    <organismsDiffer>false</organismsDiffer>
    <experiments>3</experiments>
</comment>
<comment type="interaction">
    <interactant intactId="EBI-2927498">
        <id>O60883</id>
    </interactant>
    <interactant intactId="EBI-8650934">
        <id>P48230</id>
        <label>TM4SF4</label>
    </interactant>
    <organismsDiffer>false</organismsDiffer>
    <experiments>3</experiments>
</comment>
<comment type="interaction">
    <interactant intactId="EBI-2927498">
        <id>O60883</id>
    </interactant>
    <interactant intactId="EBI-348587">
        <id>Q9BVK8</id>
        <label>TMEM147</label>
    </interactant>
    <organismsDiffer>false</organismsDiffer>
    <experiments>3</experiments>
</comment>
<comment type="interaction">
    <interactant intactId="EBI-2927498">
        <id>O60883</id>
    </interactant>
    <interactant intactId="EBI-12887458">
        <id>Q9BU79</id>
        <label>TMEM243</label>
    </interactant>
    <organismsDiffer>false</organismsDiffer>
    <experiments>3</experiments>
</comment>
<comment type="interaction">
    <interactant intactId="EBI-2927498">
        <id>O60883</id>
    </interactant>
    <interactant intactId="EBI-10314986">
        <id>Q9NWD8</id>
        <label>TMEM248</label>
    </interactant>
    <organismsDiffer>false</organismsDiffer>
    <experiments>3</experiments>
</comment>
<comment type="interaction">
    <interactant intactId="EBI-2927498">
        <id>O60883</id>
    </interactant>
    <interactant intactId="EBI-18178701">
        <id>Q4KMG9</id>
        <label>TMEM52B</label>
    </interactant>
    <organismsDiffer>false</organismsDiffer>
    <experiments>3</experiments>
</comment>
<comment type="interaction">
    <interactant intactId="EBI-2927498">
        <id>O60883</id>
    </interactant>
    <interactant intactId="EBI-3922833">
        <id>Q969K7</id>
        <label>TMEM54</label>
    </interactant>
    <organismsDiffer>false</organismsDiffer>
    <experiments>3</experiments>
</comment>
<comment type="interaction">
    <interactant intactId="EBI-2927498">
        <id>O60883</id>
    </interactant>
    <interactant intactId="EBI-11742770">
        <id>Q96HE8</id>
        <label>TMEM80</label>
    </interactant>
    <organismsDiffer>false</organismsDiffer>
    <experiments>3</experiments>
</comment>
<comment type="interaction">
    <interactant intactId="EBI-2927498">
        <id>O60883</id>
    </interactant>
    <interactant intactId="EBI-12015604">
        <id>Q8N2M4</id>
        <label>TMEM86A</label>
    </interactant>
    <organismsDiffer>false</organismsDiffer>
    <experiments>3</experiments>
</comment>
<comment type="interaction">
    <interactant intactId="EBI-2927498">
        <id>O60883</id>
    </interactant>
    <interactant intactId="EBI-2548832">
        <id>Q8N661</id>
        <label>TMEM86B</label>
    </interactant>
    <organismsDiffer>false</organismsDiffer>
    <experiments>3</experiments>
</comment>
<comment type="interaction">
    <interactant intactId="EBI-2927498">
        <id>O60883</id>
    </interactant>
    <interactant intactId="EBI-12111910">
        <id>Q5BJF2</id>
        <label>TMEM97</label>
    </interactant>
    <organismsDiffer>false</organismsDiffer>
    <experiments>3</experiments>
</comment>
<comment type="interaction">
    <interactant intactId="EBI-2927498">
        <id>O60883</id>
    </interactant>
    <interactant intactId="EBI-717441">
        <id>O14798</id>
        <label>TNFRSF10C</label>
    </interactant>
    <organismsDiffer>false</organismsDiffer>
    <experiments>3</experiments>
</comment>
<comment type="interaction">
    <interactant intactId="EBI-2927498">
        <id>O60883</id>
    </interactant>
    <interactant intactId="EBI-2466403">
        <id>O95859</id>
        <label>TSPAN12</label>
    </interactant>
    <organismsDiffer>false</organismsDiffer>
    <experiments>3</experiments>
</comment>
<comment type="interaction">
    <interactant intactId="EBI-2927498">
        <id>O60883</id>
    </interactant>
    <interactant intactId="EBI-4401271">
        <id>Q9H1C4</id>
        <label>UNC93B1</label>
    </interactant>
    <organismsDiffer>false</organismsDiffer>
    <experiments>3</experiments>
</comment>
<comment type="interaction">
    <interactant intactId="EBI-2927498">
        <id>O60883</id>
    </interactant>
    <interactant intactId="EBI-12237619">
        <id>O75841</id>
        <label>UPK1B</label>
    </interactant>
    <organismsDiffer>false</organismsDiffer>
    <experiments>3</experiments>
</comment>
<comment type="interaction">
    <interactant intactId="EBI-2927498">
        <id>O60883</id>
    </interactant>
    <interactant intactId="EBI-13387614">
        <id>A0A087WZY1</id>
    </interactant>
    <organismsDiffer>false</organismsDiffer>
    <experiments>3</experiments>
</comment>
<comment type="subcellular location">
    <subcellularLocation>
        <location evidence="10">Cell membrane</location>
        <topology evidence="2">Multi-pass membrane protein</topology>
    </subcellularLocation>
    <subcellularLocation>
        <location evidence="1">Cell projection</location>
        <location evidence="1">Cilium membrane</location>
        <topology evidence="2">Multi-pass membrane protein</topology>
    </subcellularLocation>
    <text evidence="1">Associates with the basal membrane of Bergmann glia cell primary cilia.</text>
</comment>
<comment type="tissue specificity">
    <text evidence="8 11">Expressed in primary cortical astrocytes (at protein level) (PubMed:23690594). Expressed in the central nervous system (PubMed:9539149).</text>
</comment>
<comment type="domain">
    <text evidence="9">The N-terminal region is required for constitutive signal transduction.</text>
</comment>
<comment type="PTM">
    <text evidence="7">O-glycosylated.</text>
</comment>
<comment type="PTM">
    <text evidence="9">Undergoes metalloprotease-mediated cleavage which reduces its constitutive activity.</text>
</comment>
<comment type="PTM">
    <text evidence="10">Ubiquitinated.</text>
</comment>
<comment type="similarity">
    <text evidence="3">Belongs to the G-protein coupled receptor 1 family.</text>
</comment>
<comment type="caution">
    <text evidence="8 9 10">Has been reported to act as a receptor for prosaposin (PSAP) (PubMed:23690594). However, it has also been shown that prosaposin does not increase activity (PubMed:27072655, PubMed:28688853). It has been suggested that GPR37L1 is a constitutively active receptor (PubMed:27072655).</text>
</comment>
<reference key="1">
    <citation type="journal article" date="1998" name="FEBS Lett.">
        <title>A new family of orphan G protein-coupled receptors predominantly expressed in the brain.</title>
        <authorList>
            <person name="Valdenaire O."/>
            <person name="Giller T."/>
            <person name="Breu V."/>
            <person name="Ardati A."/>
            <person name="Schweizer A."/>
            <person name="Richards J.G."/>
        </authorList>
    </citation>
    <scope>NUCLEOTIDE SEQUENCE [MRNA]</scope>
    <scope>TISSUE SPECIFICITY</scope>
    <scope>VARIANT ASP-90</scope>
    <source>
        <tissue>Brain</tissue>
    </source>
</reference>
<reference key="2">
    <citation type="journal article" date="2004" name="Nat. Genet.">
        <title>Complete sequencing and characterization of 21,243 full-length human cDNAs.</title>
        <authorList>
            <person name="Ota T."/>
            <person name="Suzuki Y."/>
            <person name="Nishikawa T."/>
            <person name="Otsuki T."/>
            <person name="Sugiyama T."/>
            <person name="Irie R."/>
            <person name="Wakamatsu A."/>
            <person name="Hayashi K."/>
            <person name="Sato H."/>
            <person name="Nagai K."/>
            <person name="Kimura K."/>
            <person name="Makita H."/>
            <person name="Sekine M."/>
            <person name="Obayashi M."/>
            <person name="Nishi T."/>
            <person name="Shibahara T."/>
            <person name="Tanaka T."/>
            <person name="Ishii S."/>
            <person name="Yamamoto J."/>
            <person name="Saito K."/>
            <person name="Kawai Y."/>
            <person name="Isono Y."/>
            <person name="Nakamura Y."/>
            <person name="Nagahari K."/>
            <person name="Murakami K."/>
            <person name="Yasuda T."/>
            <person name="Iwayanagi T."/>
            <person name="Wagatsuma M."/>
            <person name="Shiratori A."/>
            <person name="Sudo H."/>
            <person name="Hosoiri T."/>
            <person name="Kaku Y."/>
            <person name="Kodaira H."/>
            <person name="Kondo H."/>
            <person name="Sugawara M."/>
            <person name="Takahashi M."/>
            <person name="Kanda K."/>
            <person name="Yokoi T."/>
            <person name="Furuya T."/>
            <person name="Kikkawa E."/>
            <person name="Omura Y."/>
            <person name="Abe K."/>
            <person name="Kamihara K."/>
            <person name="Katsuta N."/>
            <person name="Sato K."/>
            <person name="Tanikawa M."/>
            <person name="Yamazaki M."/>
            <person name="Ninomiya K."/>
            <person name="Ishibashi T."/>
            <person name="Yamashita H."/>
            <person name="Murakawa K."/>
            <person name="Fujimori K."/>
            <person name="Tanai H."/>
            <person name="Kimata M."/>
            <person name="Watanabe M."/>
            <person name="Hiraoka S."/>
            <person name="Chiba Y."/>
            <person name="Ishida S."/>
            <person name="Ono Y."/>
            <person name="Takiguchi S."/>
            <person name="Watanabe S."/>
            <person name="Yosida M."/>
            <person name="Hotuta T."/>
            <person name="Kusano J."/>
            <person name="Kanehori K."/>
            <person name="Takahashi-Fujii A."/>
            <person name="Hara H."/>
            <person name="Tanase T.-O."/>
            <person name="Nomura Y."/>
            <person name="Togiya S."/>
            <person name="Komai F."/>
            <person name="Hara R."/>
            <person name="Takeuchi K."/>
            <person name="Arita M."/>
            <person name="Imose N."/>
            <person name="Musashino K."/>
            <person name="Yuuki H."/>
            <person name="Oshima A."/>
            <person name="Sasaki N."/>
            <person name="Aotsuka S."/>
            <person name="Yoshikawa Y."/>
            <person name="Matsunawa H."/>
            <person name="Ichihara T."/>
            <person name="Shiohata N."/>
            <person name="Sano S."/>
            <person name="Moriya S."/>
            <person name="Momiyama H."/>
            <person name="Satoh N."/>
            <person name="Takami S."/>
            <person name="Terashima Y."/>
            <person name="Suzuki O."/>
            <person name="Nakagawa S."/>
            <person name="Senoh A."/>
            <person name="Mizoguchi H."/>
            <person name="Goto Y."/>
            <person name="Shimizu F."/>
            <person name="Wakebe H."/>
            <person name="Hishigaki H."/>
            <person name="Watanabe T."/>
            <person name="Sugiyama A."/>
            <person name="Takemoto M."/>
            <person name="Kawakami B."/>
            <person name="Yamazaki M."/>
            <person name="Watanabe K."/>
            <person name="Kumagai A."/>
            <person name="Itakura S."/>
            <person name="Fukuzumi Y."/>
            <person name="Fujimori Y."/>
            <person name="Komiyama M."/>
            <person name="Tashiro H."/>
            <person name="Tanigami A."/>
            <person name="Fujiwara T."/>
            <person name="Ono T."/>
            <person name="Yamada K."/>
            <person name="Fujii Y."/>
            <person name="Ozaki K."/>
            <person name="Hirao M."/>
            <person name="Ohmori Y."/>
            <person name="Kawabata A."/>
            <person name="Hikiji T."/>
            <person name="Kobatake N."/>
            <person name="Inagaki H."/>
            <person name="Ikema Y."/>
            <person name="Okamoto S."/>
            <person name="Okitani R."/>
            <person name="Kawakami T."/>
            <person name="Noguchi S."/>
            <person name="Itoh T."/>
            <person name="Shigeta K."/>
            <person name="Senba T."/>
            <person name="Matsumura K."/>
            <person name="Nakajima Y."/>
            <person name="Mizuno T."/>
            <person name="Morinaga M."/>
            <person name="Sasaki M."/>
            <person name="Togashi T."/>
            <person name="Oyama M."/>
            <person name="Hata H."/>
            <person name="Watanabe M."/>
            <person name="Komatsu T."/>
            <person name="Mizushima-Sugano J."/>
            <person name="Satoh T."/>
            <person name="Shirai Y."/>
            <person name="Takahashi Y."/>
            <person name="Nakagawa K."/>
            <person name="Okumura K."/>
            <person name="Nagase T."/>
            <person name="Nomura N."/>
            <person name="Kikuchi H."/>
            <person name="Masuho Y."/>
            <person name="Yamashita R."/>
            <person name="Nakai K."/>
            <person name="Yada T."/>
            <person name="Nakamura Y."/>
            <person name="Ohara O."/>
            <person name="Isogai T."/>
            <person name="Sugano S."/>
        </authorList>
    </citation>
    <scope>NUCLEOTIDE SEQUENCE [LARGE SCALE MRNA]</scope>
    <scope>VARIANT ASP-90</scope>
    <source>
        <tissue>Brain</tissue>
    </source>
</reference>
<reference key="3">
    <citation type="submission" date="2005-04" db="EMBL/GenBank/DDBJ databases">
        <authorList>
            <person name="Suzuki Y."/>
            <person name="Sugano S."/>
            <person name="Totoki Y."/>
            <person name="Toyoda A."/>
            <person name="Takeda T."/>
            <person name="Sakaki Y."/>
            <person name="Tanaka A."/>
            <person name="Yokoyama S."/>
        </authorList>
    </citation>
    <scope>NUCLEOTIDE SEQUENCE [LARGE SCALE MRNA]</scope>
    <source>
        <tissue>Cerebellum</tissue>
    </source>
</reference>
<reference key="4">
    <citation type="journal article" date="2006" name="Nature">
        <title>The DNA sequence and biological annotation of human chromosome 1.</title>
        <authorList>
            <person name="Gregory S.G."/>
            <person name="Barlow K.F."/>
            <person name="McLay K.E."/>
            <person name="Kaul R."/>
            <person name="Swarbreck D."/>
            <person name="Dunham A."/>
            <person name="Scott C.E."/>
            <person name="Howe K.L."/>
            <person name="Woodfine K."/>
            <person name="Spencer C.C.A."/>
            <person name="Jones M.C."/>
            <person name="Gillson C."/>
            <person name="Searle S."/>
            <person name="Zhou Y."/>
            <person name="Kokocinski F."/>
            <person name="McDonald L."/>
            <person name="Evans R."/>
            <person name="Phillips K."/>
            <person name="Atkinson A."/>
            <person name="Cooper R."/>
            <person name="Jones C."/>
            <person name="Hall R.E."/>
            <person name="Andrews T.D."/>
            <person name="Lloyd C."/>
            <person name="Ainscough R."/>
            <person name="Almeida J.P."/>
            <person name="Ambrose K.D."/>
            <person name="Anderson F."/>
            <person name="Andrew R.W."/>
            <person name="Ashwell R.I.S."/>
            <person name="Aubin K."/>
            <person name="Babbage A.K."/>
            <person name="Bagguley C.L."/>
            <person name="Bailey J."/>
            <person name="Beasley H."/>
            <person name="Bethel G."/>
            <person name="Bird C.P."/>
            <person name="Bray-Allen S."/>
            <person name="Brown J.Y."/>
            <person name="Brown A.J."/>
            <person name="Buckley D."/>
            <person name="Burton J."/>
            <person name="Bye J."/>
            <person name="Carder C."/>
            <person name="Chapman J.C."/>
            <person name="Clark S.Y."/>
            <person name="Clarke G."/>
            <person name="Clee C."/>
            <person name="Cobley V."/>
            <person name="Collier R.E."/>
            <person name="Corby N."/>
            <person name="Coville G.J."/>
            <person name="Davies J."/>
            <person name="Deadman R."/>
            <person name="Dunn M."/>
            <person name="Earthrowl M."/>
            <person name="Ellington A.G."/>
            <person name="Errington H."/>
            <person name="Frankish A."/>
            <person name="Frankland J."/>
            <person name="French L."/>
            <person name="Garner P."/>
            <person name="Garnett J."/>
            <person name="Gay L."/>
            <person name="Ghori M.R.J."/>
            <person name="Gibson R."/>
            <person name="Gilby L.M."/>
            <person name="Gillett W."/>
            <person name="Glithero R.J."/>
            <person name="Grafham D.V."/>
            <person name="Griffiths C."/>
            <person name="Griffiths-Jones S."/>
            <person name="Grocock R."/>
            <person name="Hammond S."/>
            <person name="Harrison E.S.I."/>
            <person name="Hart E."/>
            <person name="Haugen E."/>
            <person name="Heath P.D."/>
            <person name="Holmes S."/>
            <person name="Holt K."/>
            <person name="Howden P.J."/>
            <person name="Hunt A.R."/>
            <person name="Hunt S.E."/>
            <person name="Hunter G."/>
            <person name="Isherwood J."/>
            <person name="James R."/>
            <person name="Johnson C."/>
            <person name="Johnson D."/>
            <person name="Joy A."/>
            <person name="Kay M."/>
            <person name="Kershaw J.K."/>
            <person name="Kibukawa M."/>
            <person name="Kimberley A.M."/>
            <person name="King A."/>
            <person name="Knights A.J."/>
            <person name="Lad H."/>
            <person name="Laird G."/>
            <person name="Lawlor S."/>
            <person name="Leongamornlert D.A."/>
            <person name="Lloyd D.M."/>
            <person name="Loveland J."/>
            <person name="Lovell J."/>
            <person name="Lush M.J."/>
            <person name="Lyne R."/>
            <person name="Martin S."/>
            <person name="Mashreghi-Mohammadi M."/>
            <person name="Matthews L."/>
            <person name="Matthews N.S.W."/>
            <person name="McLaren S."/>
            <person name="Milne S."/>
            <person name="Mistry S."/>
            <person name="Moore M.J.F."/>
            <person name="Nickerson T."/>
            <person name="O'Dell C.N."/>
            <person name="Oliver K."/>
            <person name="Palmeiri A."/>
            <person name="Palmer S.A."/>
            <person name="Parker A."/>
            <person name="Patel D."/>
            <person name="Pearce A.V."/>
            <person name="Peck A.I."/>
            <person name="Pelan S."/>
            <person name="Phelps K."/>
            <person name="Phillimore B.J."/>
            <person name="Plumb R."/>
            <person name="Rajan J."/>
            <person name="Raymond C."/>
            <person name="Rouse G."/>
            <person name="Saenphimmachak C."/>
            <person name="Sehra H.K."/>
            <person name="Sheridan E."/>
            <person name="Shownkeen R."/>
            <person name="Sims S."/>
            <person name="Skuce C.D."/>
            <person name="Smith M."/>
            <person name="Steward C."/>
            <person name="Subramanian S."/>
            <person name="Sycamore N."/>
            <person name="Tracey A."/>
            <person name="Tromans A."/>
            <person name="Van Helmond Z."/>
            <person name="Wall M."/>
            <person name="Wallis J.M."/>
            <person name="White S."/>
            <person name="Whitehead S.L."/>
            <person name="Wilkinson J.E."/>
            <person name="Willey D.L."/>
            <person name="Williams H."/>
            <person name="Wilming L."/>
            <person name="Wray P.W."/>
            <person name="Wu Z."/>
            <person name="Coulson A."/>
            <person name="Vaudin M."/>
            <person name="Sulston J.E."/>
            <person name="Durbin R.M."/>
            <person name="Hubbard T."/>
            <person name="Wooster R."/>
            <person name="Dunham I."/>
            <person name="Carter N.P."/>
            <person name="McVean G."/>
            <person name="Ross M.T."/>
            <person name="Harrow J."/>
            <person name="Olson M.V."/>
            <person name="Beck S."/>
            <person name="Rogers J."/>
            <person name="Bentley D.R."/>
        </authorList>
    </citation>
    <scope>NUCLEOTIDE SEQUENCE [LARGE SCALE GENOMIC DNA]</scope>
</reference>
<reference key="5">
    <citation type="journal article" date="2004" name="Genome Res.">
        <title>The status, quality, and expansion of the NIH full-length cDNA project: the Mammalian Gene Collection (MGC).</title>
        <authorList>
            <consortium name="The MGC Project Team"/>
        </authorList>
    </citation>
    <scope>NUCLEOTIDE SEQUENCE [LARGE SCALE MRNA]</scope>
    <scope>VARIANT ARG-91</scope>
    <source>
        <tissue>Brain</tissue>
    </source>
</reference>
<reference key="6">
    <citation type="journal article" date="2013" name="J. Proteome Res.">
        <title>LC-MS/MS characterization of O-glycosylation sites and glycan structures of human cerebrospinal fluid glycoproteins.</title>
        <authorList>
            <person name="Halim A."/>
            <person name="Ruetschi U."/>
            <person name="Larson G."/>
            <person name="Nilsson J."/>
        </authorList>
    </citation>
    <scope>GLYCOSYLATION AT THR-79; THR-85; SER-86; THR-95 AND THR-107</scope>
    <scope>IDENTIFICATION BY MASS SPECTROMETRY</scope>
</reference>
<reference key="7">
    <citation type="journal article" date="2013" name="Proc. Natl. Acad. Sci. U.S.A.">
        <title>GPR37 and GPR37L1 are receptors for the neuroprotective and glioprotective factors prosaptide and prosaposin.</title>
        <authorList>
            <person name="Meyer R.C."/>
            <person name="Giddens M.M."/>
            <person name="Schaefer S.A."/>
            <person name="Hall R.A."/>
        </authorList>
    </citation>
    <scope>FUNCTION</scope>
    <scope>TISSUE SPECIFICITY</scope>
</reference>
<reference key="8">
    <citation type="journal article" date="2016" name="Sci. Signal.">
        <title>Metalloprotease cleavage of the N terminus of the orphan G protein-coupled receptor GPR37L1 reduces its constitutive activity.</title>
        <authorList>
            <person name="Coleman J.L."/>
            <person name="Ngo T."/>
            <person name="Schmidt J."/>
            <person name="Mrad N."/>
            <person name="Liew C.K."/>
            <person name="Jones N.M."/>
            <person name="Graham R.M."/>
            <person name="Smith N.J."/>
        </authorList>
    </citation>
    <scope>FUNCTION</scope>
    <scope>CLEAVAGE</scope>
    <scope>DOMAIN</scope>
</reference>
<reference key="9">
    <citation type="journal article" date="2017" name="Neurobiol. Dis.">
        <title>GPR37L1 modulates seizure susceptibility: Evidence from mouse studies and analyses of a human GPR37L1 variant.</title>
        <authorList>
            <person name="Giddens M.M."/>
            <person name="Wong J.C."/>
            <person name="Schroeder J.P."/>
            <person name="Farrow E.G."/>
            <person name="Smith B.M."/>
            <person name="Owino S."/>
            <person name="Soden S.E."/>
            <person name="Meyer R.C."/>
            <person name="Saunders C."/>
            <person name="LePichon J.B."/>
            <person name="Weinshenker D."/>
            <person name="Escayg A."/>
            <person name="Hall R.A."/>
        </authorList>
    </citation>
    <scope>FUNCTION</scope>
    <scope>SUBCELLULAR LOCATION</scope>
    <scope>UBIQUITINATION</scope>
    <scope>VARIANT ASN-349</scope>
    <scope>CHARACTERIZATION OF VARIANT ASN-349</scope>
</reference>
<accession>O60883</accession>
<accession>B2R7M9</accession>
<accession>Q5SXP7</accession>
<accession>Q86VP7</accession>